<accession>P77834</accession>
<feature type="chain" id="PRO_0000184539" description="Purine nucleoside phosphorylase 1">
    <location>
        <begin position="1"/>
        <end position="274"/>
    </location>
</feature>
<feature type="binding site" evidence="3">
    <location>
        <position position="29"/>
    </location>
    <ligand>
        <name>phosphate</name>
        <dbReference type="ChEBI" id="CHEBI:43474"/>
    </ligand>
</feature>
<feature type="binding site" evidence="2">
    <location>
        <position position="60"/>
    </location>
    <ligand>
        <name>phosphate</name>
        <dbReference type="ChEBI" id="CHEBI:43474"/>
    </ligand>
</feature>
<feature type="binding site" evidence="2">
    <location>
        <begin position="80"/>
        <end position="82"/>
    </location>
    <ligand>
        <name>phosphate</name>
        <dbReference type="ChEBI" id="CHEBI:43474"/>
    </ligand>
</feature>
<feature type="binding site" evidence="2">
    <location>
        <position position="112"/>
    </location>
    <ligand>
        <name>phosphate</name>
        <dbReference type="ChEBI" id="CHEBI:43474"/>
    </ligand>
</feature>
<feature type="binding site" evidence="2">
    <location>
        <position position="192"/>
    </location>
    <ligand>
        <name>a purine D-ribonucleoside</name>
        <dbReference type="ChEBI" id="CHEBI:142355"/>
    </ligand>
</feature>
<feature type="binding site" evidence="2">
    <location>
        <position position="211"/>
    </location>
    <ligand>
        <name>phosphate</name>
        <dbReference type="ChEBI" id="CHEBI:43474"/>
    </ligand>
</feature>
<feature type="binding site" evidence="2">
    <location>
        <position position="234"/>
    </location>
    <ligand>
        <name>a purine D-ribonucleoside</name>
        <dbReference type="ChEBI" id="CHEBI:142355"/>
    </ligand>
</feature>
<feature type="modified residue" description="Phosphoserine" evidence="1">
    <location>
        <position position="29"/>
    </location>
</feature>
<protein>
    <recommendedName>
        <fullName evidence="6">Purine nucleoside phosphorylase 1</fullName>
        <shortName>PNP 1</shortName>
        <ecNumber evidence="4">2.4.2.1</ecNumber>
    </recommendedName>
    <alternativeName>
        <fullName>Inosine phosphorylase</fullName>
    </alternativeName>
    <alternativeName>
        <fullName>Inosine-guanosine phosphorylase</fullName>
    </alternativeName>
    <alternativeName>
        <fullName>Purine nucleoside phosphorylase I</fullName>
        <shortName>PNP I</shortName>
        <shortName evidence="6">Pu-NPase I</shortName>
    </alternativeName>
</protein>
<comment type="function">
    <text evidence="4 5">The purine nucleoside phosphorylases catalyze the phosphorolytic breakdown of the N-glycosidic bond in the beta-(deoxy)ribonucleoside molecules, with the formation of the corresponding free purine bases and pentose-1-phosphate. Cleaves guanosine, inosine, 2'-deoxyguanosine and 2'-deoxyinosine.</text>
</comment>
<comment type="catalytic activity">
    <reaction evidence="4">
        <text>a purine D-ribonucleoside + phosphate = a purine nucleobase + alpha-D-ribose 1-phosphate</text>
        <dbReference type="Rhea" id="RHEA:19805"/>
        <dbReference type="ChEBI" id="CHEBI:26386"/>
        <dbReference type="ChEBI" id="CHEBI:43474"/>
        <dbReference type="ChEBI" id="CHEBI:57720"/>
        <dbReference type="ChEBI" id="CHEBI:142355"/>
        <dbReference type="EC" id="2.4.2.1"/>
    </reaction>
</comment>
<comment type="catalytic activity">
    <reaction evidence="4">
        <text>a purine 2'-deoxy-D-ribonucleoside + phosphate = a purine nucleobase + 2-deoxy-alpha-D-ribose 1-phosphate</text>
        <dbReference type="Rhea" id="RHEA:36431"/>
        <dbReference type="ChEBI" id="CHEBI:26386"/>
        <dbReference type="ChEBI" id="CHEBI:43474"/>
        <dbReference type="ChEBI" id="CHEBI:57259"/>
        <dbReference type="ChEBI" id="CHEBI:142361"/>
        <dbReference type="EC" id="2.4.2.1"/>
    </reaction>
</comment>
<comment type="pathway">
    <text>Purine metabolism; purine nucleoside salvage.</text>
</comment>
<comment type="subunit">
    <text evidence="4">Homotrimer.</text>
</comment>
<comment type="similarity">
    <text evidence="7">Belongs to the PNP/MTAP phosphorylase family.</text>
</comment>
<proteinExistence type="evidence at protein level"/>
<name>PUNA_GEOSE</name>
<evidence type="ECO:0000250" key="1"/>
<evidence type="ECO:0000250" key="2">
    <source>
        <dbReference type="UniProtKB" id="P45563"/>
    </source>
</evidence>
<evidence type="ECO:0000250" key="3">
    <source>
        <dbReference type="UniProtKB" id="P9WP01"/>
    </source>
</evidence>
<evidence type="ECO:0000269" key="4">
    <source>
    </source>
</evidence>
<evidence type="ECO:0000269" key="5">
    <source>
    </source>
</evidence>
<evidence type="ECO:0000303" key="6">
    <source>
    </source>
</evidence>
<evidence type="ECO:0000305" key="7"/>
<reference key="1">
    <citation type="journal article" date="1997" name="Biosci. Biotechnol. Biochem.">
        <title>Cloning and expression of purine nucleoside phosphorylase I gene from Bacillus stearothermophilus TH 6-2.</title>
        <authorList>
            <person name="Hamamoto T."/>
            <person name="Okuyama K."/>
            <person name="Noguchi T."/>
            <person name="Midorikawa Y."/>
        </authorList>
    </citation>
    <scope>NUCLEOTIDE SEQUENCE [GENOMIC DNA]</scope>
    <scope>FUNCTION</scope>
    <source>
        <strain>TH 6-2</strain>
    </source>
</reference>
<reference key="2">
    <citation type="journal article" date="1996" name="Biosci. Biotechnol. Biochem.">
        <title>Purification and characterization of purine nucleoside phosphorylase and pyrimidine nucleoside phosphorylase from Bacillus stearothermophilus TH 6-2.</title>
        <authorList>
            <person name="Hamamoto T."/>
            <person name="Noguchi T."/>
            <person name="Midorikawa Y."/>
        </authorList>
    </citation>
    <scope>PROTEIN SEQUENCE OF 1-31</scope>
    <scope>FUNCTION</scope>
    <scope>CATALYTIC ACTIVITY</scope>
    <scope>SUBSTRATE SPECIFICITY</scope>
    <scope>SUBUNIT</scope>
    <source>
        <strain>TH 6-2</strain>
    </source>
</reference>
<gene>
    <name type="primary">punA</name>
    <name type="synonym">deoD</name>
</gene>
<keyword id="KW-0903">Direct protein sequencing</keyword>
<keyword id="KW-0328">Glycosyltransferase</keyword>
<keyword id="KW-0597">Phosphoprotein</keyword>
<keyword id="KW-0808">Transferase</keyword>
<organism>
    <name type="scientific">Geobacillus stearothermophilus</name>
    <name type="common">Bacillus stearothermophilus</name>
    <dbReference type="NCBI Taxonomy" id="1422"/>
    <lineage>
        <taxon>Bacteria</taxon>
        <taxon>Bacillati</taxon>
        <taxon>Bacillota</taxon>
        <taxon>Bacilli</taxon>
        <taxon>Bacillales</taxon>
        <taxon>Anoxybacillaceae</taxon>
        <taxon>Geobacillus</taxon>
    </lineage>
</organism>
<dbReference type="EC" id="2.4.2.1" evidence="4"/>
<dbReference type="EMBL" id="D87959">
    <property type="protein sequence ID" value="BAA13509.1"/>
    <property type="molecule type" value="Genomic_DNA"/>
</dbReference>
<dbReference type="PIR" id="JC5466">
    <property type="entry name" value="JT0873"/>
</dbReference>
<dbReference type="SMR" id="P77834"/>
<dbReference type="BRENDA" id="2.4.2.1">
    <property type="organism ID" value="623"/>
</dbReference>
<dbReference type="UniPathway" id="UPA00606"/>
<dbReference type="GO" id="GO:0005737">
    <property type="term" value="C:cytoplasm"/>
    <property type="evidence" value="ECO:0007669"/>
    <property type="project" value="TreeGrafter"/>
</dbReference>
<dbReference type="GO" id="GO:0004731">
    <property type="term" value="F:purine-nucleoside phosphorylase activity"/>
    <property type="evidence" value="ECO:0007669"/>
    <property type="project" value="UniProtKB-EC"/>
</dbReference>
<dbReference type="GO" id="GO:0009116">
    <property type="term" value="P:nucleoside metabolic process"/>
    <property type="evidence" value="ECO:0007669"/>
    <property type="project" value="InterPro"/>
</dbReference>
<dbReference type="CDD" id="cd09009">
    <property type="entry name" value="PNP-EcPNPII_like"/>
    <property type="match status" value="1"/>
</dbReference>
<dbReference type="FunFam" id="3.40.50.1580:FF:000010">
    <property type="entry name" value="Purine nucleoside phosphorylase"/>
    <property type="match status" value="1"/>
</dbReference>
<dbReference type="Gene3D" id="3.40.50.1580">
    <property type="entry name" value="Nucleoside phosphorylase domain"/>
    <property type="match status" value="1"/>
</dbReference>
<dbReference type="InterPro" id="IPR000845">
    <property type="entry name" value="Nucleoside_phosphorylase_d"/>
</dbReference>
<dbReference type="InterPro" id="IPR035994">
    <property type="entry name" value="Nucleoside_phosphorylase_sf"/>
</dbReference>
<dbReference type="InterPro" id="IPR011270">
    <property type="entry name" value="Pur_Nuc_Pase_Ino/Guo-sp"/>
</dbReference>
<dbReference type="InterPro" id="IPR011268">
    <property type="entry name" value="Purine_phosphorylase"/>
</dbReference>
<dbReference type="InterPro" id="IPR018099">
    <property type="entry name" value="Purine_phosphorylase-2_CS"/>
</dbReference>
<dbReference type="NCBIfam" id="TIGR01700">
    <property type="entry name" value="PNPH"/>
    <property type="match status" value="1"/>
</dbReference>
<dbReference type="NCBIfam" id="TIGR01697">
    <property type="entry name" value="PNPH-PUNA-XAPA"/>
    <property type="match status" value="1"/>
</dbReference>
<dbReference type="NCBIfam" id="NF006054">
    <property type="entry name" value="PRK08202.1"/>
    <property type="match status" value="1"/>
</dbReference>
<dbReference type="PANTHER" id="PTHR11904">
    <property type="entry name" value="METHYLTHIOADENOSINE/PURINE NUCLEOSIDE PHOSPHORYLASE"/>
    <property type="match status" value="1"/>
</dbReference>
<dbReference type="PANTHER" id="PTHR11904:SF9">
    <property type="entry name" value="PURINE NUCLEOSIDE PHOSPHORYLASE-RELATED"/>
    <property type="match status" value="1"/>
</dbReference>
<dbReference type="Pfam" id="PF01048">
    <property type="entry name" value="PNP_UDP_1"/>
    <property type="match status" value="1"/>
</dbReference>
<dbReference type="PIRSF" id="PIRSF000477">
    <property type="entry name" value="PurNPase"/>
    <property type="match status" value="1"/>
</dbReference>
<dbReference type="SUPFAM" id="SSF53167">
    <property type="entry name" value="Purine and uridine phosphorylases"/>
    <property type="match status" value="1"/>
</dbReference>
<dbReference type="PROSITE" id="PS01240">
    <property type="entry name" value="PNP_MTAP_2"/>
    <property type="match status" value="1"/>
</dbReference>
<sequence>MNRTAIEQAAQFLKEKFPTSPQIGLILGSGLGVLADEIEQAIKIPYSDIPNFPVSTVEGHAGQLVYGQLEGATVVVMQGRFHYYEGYSFDKVTFPVRVMKALGVEQLIVTNAAGGVNESFEPGDLMIISDHINNMGGNPLIGPNDSALGVRFPDMSEAYSKRLRQLAKDVANDIGLRVREGVYVANTGPAYETPAEIRMIRVMGGDAVGMSTVPEVIVARHAGMEVLGISCISNMAAGILDQPLTHDEVIETTEKVKADFLRFVKAIVRNMAKN</sequence>